<accession>B2GEV8</accession>
<proteinExistence type="inferred from homology"/>
<dbReference type="EMBL" id="AP008937">
    <property type="protein sequence ID" value="BAG26347.1"/>
    <property type="molecule type" value="Genomic_DNA"/>
</dbReference>
<dbReference type="RefSeq" id="WP_003685631.1">
    <property type="nucleotide sequence ID" value="NC_010610.1"/>
</dbReference>
<dbReference type="SMR" id="B2GEV8"/>
<dbReference type="GeneID" id="83715695"/>
<dbReference type="KEGG" id="lfe:LAF_0011"/>
<dbReference type="eggNOG" id="COG0359">
    <property type="taxonomic scope" value="Bacteria"/>
</dbReference>
<dbReference type="HOGENOM" id="CLU_078938_3_2_9"/>
<dbReference type="Proteomes" id="UP000001697">
    <property type="component" value="Chromosome"/>
</dbReference>
<dbReference type="GO" id="GO:1990904">
    <property type="term" value="C:ribonucleoprotein complex"/>
    <property type="evidence" value="ECO:0007669"/>
    <property type="project" value="UniProtKB-KW"/>
</dbReference>
<dbReference type="GO" id="GO:0005840">
    <property type="term" value="C:ribosome"/>
    <property type="evidence" value="ECO:0007669"/>
    <property type="project" value="UniProtKB-KW"/>
</dbReference>
<dbReference type="GO" id="GO:0019843">
    <property type="term" value="F:rRNA binding"/>
    <property type="evidence" value="ECO:0007669"/>
    <property type="project" value="UniProtKB-UniRule"/>
</dbReference>
<dbReference type="GO" id="GO:0003735">
    <property type="term" value="F:structural constituent of ribosome"/>
    <property type="evidence" value="ECO:0007669"/>
    <property type="project" value="InterPro"/>
</dbReference>
<dbReference type="GO" id="GO:0006412">
    <property type="term" value="P:translation"/>
    <property type="evidence" value="ECO:0007669"/>
    <property type="project" value="UniProtKB-UniRule"/>
</dbReference>
<dbReference type="FunFam" id="3.10.430.100:FF:000002">
    <property type="entry name" value="50S ribosomal protein L9"/>
    <property type="match status" value="1"/>
</dbReference>
<dbReference type="FunFam" id="3.40.5.10:FF:000002">
    <property type="entry name" value="50S ribosomal protein L9"/>
    <property type="match status" value="1"/>
</dbReference>
<dbReference type="Gene3D" id="3.10.430.100">
    <property type="entry name" value="Ribosomal protein L9, C-terminal domain"/>
    <property type="match status" value="1"/>
</dbReference>
<dbReference type="Gene3D" id="3.40.5.10">
    <property type="entry name" value="Ribosomal protein L9, N-terminal domain"/>
    <property type="match status" value="1"/>
</dbReference>
<dbReference type="HAMAP" id="MF_00503">
    <property type="entry name" value="Ribosomal_bL9"/>
    <property type="match status" value="1"/>
</dbReference>
<dbReference type="InterPro" id="IPR000244">
    <property type="entry name" value="Ribosomal_bL9"/>
</dbReference>
<dbReference type="InterPro" id="IPR009027">
    <property type="entry name" value="Ribosomal_bL9/RNase_H1_N"/>
</dbReference>
<dbReference type="InterPro" id="IPR020594">
    <property type="entry name" value="Ribosomal_bL9_bac/chp"/>
</dbReference>
<dbReference type="InterPro" id="IPR020069">
    <property type="entry name" value="Ribosomal_bL9_C"/>
</dbReference>
<dbReference type="InterPro" id="IPR036791">
    <property type="entry name" value="Ribosomal_bL9_C_sf"/>
</dbReference>
<dbReference type="InterPro" id="IPR020070">
    <property type="entry name" value="Ribosomal_bL9_N"/>
</dbReference>
<dbReference type="InterPro" id="IPR036935">
    <property type="entry name" value="Ribosomal_bL9_N_sf"/>
</dbReference>
<dbReference type="NCBIfam" id="TIGR00158">
    <property type="entry name" value="L9"/>
    <property type="match status" value="1"/>
</dbReference>
<dbReference type="PANTHER" id="PTHR21368">
    <property type="entry name" value="50S RIBOSOMAL PROTEIN L9"/>
    <property type="match status" value="1"/>
</dbReference>
<dbReference type="Pfam" id="PF03948">
    <property type="entry name" value="Ribosomal_L9_C"/>
    <property type="match status" value="1"/>
</dbReference>
<dbReference type="Pfam" id="PF01281">
    <property type="entry name" value="Ribosomal_L9_N"/>
    <property type="match status" value="1"/>
</dbReference>
<dbReference type="SUPFAM" id="SSF55658">
    <property type="entry name" value="L9 N-domain-like"/>
    <property type="match status" value="1"/>
</dbReference>
<dbReference type="SUPFAM" id="SSF55653">
    <property type="entry name" value="Ribosomal protein L9 C-domain"/>
    <property type="match status" value="1"/>
</dbReference>
<dbReference type="PROSITE" id="PS00651">
    <property type="entry name" value="RIBOSOMAL_L9"/>
    <property type="match status" value="1"/>
</dbReference>
<gene>
    <name evidence="1" type="primary">rplI</name>
    <name type="ordered locus">LAF_0011</name>
</gene>
<feature type="chain" id="PRO_1000126930" description="Large ribosomal subunit protein bL9">
    <location>
        <begin position="1"/>
        <end position="150"/>
    </location>
</feature>
<evidence type="ECO:0000255" key="1">
    <source>
        <dbReference type="HAMAP-Rule" id="MF_00503"/>
    </source>
</evidence>
<evidence type="ECO:0000305" key="2"/>
<protein>
    <recommendedName>
        <fullName evidence="1">Large ribosomal subunit protein bL9</fullName>
    </recommendedName>
    <alternativeName>
        <fullName evidence="2">50S ribosomal protein L9</fullName>
    </alternativeName>
</protein>
<reference key="1">
    <citation type="journal article" date="2008" name="DNA Res.">
        <title>Comparative genome analysis of Lactobacillus reuteri and Lactobacillus fermentum reveal a genomic island for reuterin and cobalamin production.</title>
        <authorList>
            <person name="Morita H."/>
            <person name="Toh H."/>
            <person name="Fukuda S."/>
            <person name="Horikawa H."/>
            <person name="Oshima K."/>
            <person name="Suzuki T."/>
            <person name="Murakami M."/>
            <person name="Hisamatsu S."/>
            <person name="Kato Y."/>
            <person name="Takizawa T."/>
            <person name="Fukuoka H."/>
            <person name="Yoshimura T."/>
            <person name="Itoh K."/>
            <person name="O'Sullivan D.J."/>
            <person name="McKay L.L."/>
            <person name="Ohno H."/>
            <person name="Kikuchi J."/>
            <person name="Masaoka T."/>
            <person name="Hattori M."/>
        </authorList>
    </citation>
    <scope>NUCLEOTIDE SEQUENCE [LARGE SCALE GENOMIC DNA]</scope>
    <source>
        <strain>NBRC 3956 / LMG 18251</strain>
    </source>
</reference>
<name>RL9_LIMF3</name>
<keyword id="KW-1185">Reference proteome</keyword>
<keyword id="KW-0687">Ribonucleoprotein</keyword>
<keyword id="KW-0689">Ribosomal protein</keyword>
<keyword id="KW-0694">RNA-binding</keyword>
<keyword id="KW-0699">rRNA-binding</keyword>
<organism>
    <name type="scientific">Limosilactobacillus fermentum (strain NBRC 3956 / LMG 18251)</name>
    <name type="common">Lactobacillus fermentum</name>
    <dbReference type="NCBI Taxonomy" id="334390"/>
    <lineage>
        <taxon>Bacteria</taxon>
        <taxon>Bacillati</taxon>
        <taxon>Bacillota</taxon>
        <taxon>Bacilli</taxon>
        <taxon>Lactobacillales</taxon>
        <taxon>Lactobacillaceae</taxon>
        <taxon>Limosilactobacillus</taxon>
    </lineage>
</organism>
<sequence>MKVIFTEDVKGRGKRGEIKNVPDGYAQNFLIPRGKAKEANKAAMSELAGQERSREKHEAEELAAAKELKKVLEDDKTVVELTGKAGTDGRMFGSVSTKQIATALEKQYQIKLDKRKMELAAPIRALGYVNVPVKLHHDVEATLRVHIAEK</sequence>
<comment type="function">
    <text evidence="1">Binds to the 23S rRNA.</text>
</comment>
<comment type="similarity">
    <text evidence="1">Belongs to the bacterial ribosomal protein bL9 family.</text>
</comment>